<reference key="1">
    <citation type="journal article" date="2005" name="Mol. Phylogenet. Evol.">
        <title>Multigene phylogeny of the Old World mice, Murinae, reveals distinct geographic lineages and the declining utility of mitochondrial genes compared to nuclear genes.</title>
        <authorList>
            <person name="Steppan S.J."/>
            <person name="Adkins R.M."/>
            <person name="Spinks P.Q."/>
            <person name="Hale C."/>
        </authorList>
    </citation>
    <scope>NUCLEOTIDE SEQUENCE [GENOMIC DNA]</scope>
</reference>
<gene>
    <name type="primary">MT-CO2</name>
    <name type="synonym">COII</name>
    <name type="synonym">COX2</name>
    <name type="synonym">COXII</name>
    <name type="synonym">MTCO2</name>
</gene>
<evidence type="ECO:0000250" key="1">
    <source>
        <dbReference type="UniProtKB" id="P00403"/>
    </source>
</evidence>
<evidence type="ECO:0000250" key="2">
    <source>
        <dbReference type="UniProtKB" id="P00410"/>
    </source>
</evidence>
<evidence type="ECO:0000250" key="3">
    <source>
        <dbReference type="UniProtKB" id="P68530"/>
    </source>
</evidence>
<evidence type="ECO:0000305" key="4"/>
<proteinExistence type="inferred from homology"/>
<comment type="function">
    <text evidence="2">Component of the cytochrome c oxidase, the last enzyme in the mitochondrial electron transport chain which drives oxidative phosphorylation. The respiratory chain contains 3 multisubunit complexes succinate dehydrogenase (complex II, CII), ubiquinol-cytochrome c oxidoreductase (cytochrome b-c1 complex, complex III, CIII) and cytochrome c oxidase (complex IV, CIV), that cooperate to transfer electrons derived from NADH and succinate to molecular oxygen, creating an electrochemical gradient over the inner membrane that drives transmembrane transport and the ATP synthase. Cytochrome c oxidase is the component of the respiratory chain that catalyzes the reduction of oxygen to water. Electrons originating from reduced cytochrome c in the intermembrane space (IMS) are transferred via the dinuclear copper A center (CU(A)) of subunit 2 and heme A of subunit 1 to the active site in subunit 1, a binuclear center (BNC) formed by heme A3 and copper B (CU(B)). The BNC reduces molecular oxygen to 2 water molecules using 4 electrons from cytochrome c in the IMS and 4 protons from the mitochondrial matrix.</text>
</comment>
<comment type="catalytic activity">
    <reaction evidence="2">
        <text>4 Fe(II)-[cytochrome c] + O2 + 8 H(+)(in) = 4 Fe(III)-[cytochrome c] + 2 H2O + 4 H(+)(out)</text>
        <dbReference type="Rhea" id="RHEA:11436"/>
        <dbReference type="Rhea" id="RHEA-COMP:10350"/>
        <dbReference type="Rhea" id="RHEA-COMP:14399"/>
        <dbReference type="ChEBI" id="CHEBI:15377"/>
        <dbReference type="ChEBI" id="CHEBI:15378"/>
        <dbReference type="ChEBI" id="CHEBI:15379"/>
        <dbReference type="ChEBI" id="CHEBI:29033"/>
        <dbReference type="ChEBI" id="CHEBI:29034"/>
        <dbReference type="EC" id="7.1.1.9"/>
    </reaction>
    <physiologicalReaction direction="left-to-right" evidence="2">
        <dbReference type="Rhea" id="RHEA:11437"/>
    </physiologicalReaction>
</comment>
<comment type="cofactor">
    <cofactor evidence="3">
        <name>Cu cation</name>
        <dbReference type="ChEBI" id="CHEBI:23378"/>
    </cofactor>
    <text evidence="3">Binds a dinuclear copper A center per subunit.</text>
</comment>
<comment type="subunit">
    <text evidence="1 3">Component of the cytochrome c oxidase (complex IV, CIV), a multisubunit enzyme composed of 14 subunits. The complex is composed of a catalytic core of 3 subunits MT-CO1, MT-CO2 and MT-CO3, encoded in the mitochondrial DNA, and 11 supernumerary subunits COX4I, COX5A, COX5B, COX6A, COX6B, COX6C, COX7A, COX7B, COX7C, COX8 and NDUFA4, which are encoded in the nuclear genome. The complex exists as a monomer or a dimer and forms supercomplexes (SCs) in the inner mitochondrial membrane with NADH-ubiquinone oxidoreductase (complex I, CI) and ubiquinol-cytochrome c oxidoreductase (cytochrome b-c1 complex, complex III, CIII), resulting in different assemblies (supercomplex SCI(1)III(2)IV(1) and megacomplex MCI(2)III(2)IV(2)) (By similarity). Found in a complex with TMEM177, COA6, COX18, COX20, SCO1 and SCO2. Interacts with TMEM177 in a COX20-dependent manner. Interacts with COX20. Interacts with COX16 (By similarity).</text>
</comment>
<comment type="subcellular location">
    <subcellularLocation>
        <location evidence="3">Mitochondrion inner membrane</location>
        <topology evidence="3">Multi-pass membrane protein</topology>
    </subcellularLocation>
</comment>
<comment type="similarity">
    <text evidence="4">Belongs to the cytochrome c oxidase subunit 2 family.</text>
</comment>
<organism>
    <name type="scientific">Uromys caudimaculatus</name>
    <name type="common">Giant white-tailed rat</name>
    <dbReference type="NCBI Taxonomy" id="36800"/>
    <lineage>
        <taxon>Eukaryota</taxon>
        <taxon>Metazoa</taxon>
        <taxon>Chordata</taxon>
        <taxon>Craniata</taxon>
        <taxon>Vertebrata</taxon>
        <taxon>Euteleostomi</taxon>
        <taxon>Mammalia</taxon>
        <taxon>Eutheria</taxon>
        <taxon>Euarchontoglires</taxon>
        <taxon>Glires</taxon>
        <taxon>Rodentia</taxon>
        <taxon>Myomorpha</taxon>
        <taxon>Muroidea</taxon>
        <taxon>Muridae</taxon>
        <taxon>Murinae</taxon>
        <taxon>Uromys</taxon>
    </lineage>
</organism>
<protein>
    <recommendedName>
        <fullName>Cytochrome c oxidase subunit 2</fullName>
        <ecNumber>7.1.1.9</ecNumber>
    </recommendedName>
    <alternativeName>
        <fullName>Cytochrome c oxidase polypeptide II</fullName>
    </alternativeName>
</protein>
<name>COX2_UROCA</name>
<keyword id="KW-0186">Copper</keyword>
<keyword id="KW-0249">Electron transport</keyword>
<keyword id="KW-0460">Magnesium</keyword>
<keyword id="KW-0472">Membrane</keyword>
<keyword id="KW-0479">Metal-binding</keyword>
<keyword id="KW-0496">Mitochondrion</keyword>
<keyword id="KW-0999">Mitochondrion inner membrane</keyword>
<keyword id="KW-0679">Respiratory chain</keyword>
<keyword id="KW-1278">Translocase</keyword>
<keyword id="KW-0812">Transmembrane</keyword>
<keyword id="KW-1133">Transmembrane helix</keyword>
<keyword id="KW-0813">Transport</keyword>
<dbReference type="EC" id="7.1.1.9"/>
<dbReference type="EMBL" id="DQ019122">
    <property type="protein sequence ID" value="ABA28456.1"/>
    <property type="molecule type" value="Genomic_DNA"/>
</dbReference>
<dbReference type="SMR" id="Q38RU4"/>
<dbReference type="GO" id="GO:0005743">
    <property type="term" value="C:mitochondrial inner membrane"/>
    <property type="evidence" value="ECO:0007669"/>
    <property type="project" value="UniProtKB-SubCell"/>
</dbReference>
<dbReference type="GO" id="GO:0045277">
    <property type="term" value="C:respiratory chain complex IV"/>
    <property type="evidence" value="ECO:0000250"/>
    <property type="project" value="UniProtKB"/>
</dbReference>
<dbReference type="GO" id="GO:0005507">
    <property type="term" value="F:copper ion binding"/>
    <property type="evidence" value="ECO:0007669"/>
    <property type="project" value="InterPro"/>
</dbReference>
<dbReference type="GO" id="GO:0004129">
    <property type="term" value="F:cytochrome-c oxidase activity"/>
    <property type="evidence" value="ECO:0007669"/>
    <property type="project" value="UniProtKB-EC"/>
</dbReference>
<dbReference type="GO" id="GO:0042773">
    <property type="term" value="P:ATP synthesis coupled electron transport"/>
    <property type="evidence" value="ECO:0007669"/>
    <property type="project" value="TreeGrafter"/>
</dbReference>
<dbReference type="CDD" id="cd13912">
    <property type="entry name" value="CcO_II_C"/>
    <property type="match status" value="1"/>
</dbReference>
<dbReference type="FunFam" id="1.10.287.90:FF:000001">
    <property type="entry name" value="Cytochrome c oxidase subunit 2"/>
    <property type="match status" value="1"/>
</dbReference>
<dbReference type="FunFam" id="2.60.40.420:FF:000001">
    <property type="entry name" value="Cytochrome c oxidase subunit 2"/>
    <property type="match status" value="1"/>
</dbReference>
<dbReference type="Gene3D" id="1.10.287.90">
    <property type="match status" value="1"/>
</dbReference>
<dbReference type="Gene3D" id="2.60.40.420">
    <property type="entry name" value="Cupredoxins - blue copper proteins"/>
    <property type="match status" value="1"/>
</dbReference>
<dbReference type="InterPro" id="IPR045187">
    <property type="entry name" value="CcO_II"/>
</dbReference>
<dbReference type="InterPro" id="IPR002429">
    <property type="entry name" value="CcO_II-like_C"/>
</dbReference>
<dbReference type="InterPro" id="IPR034210">
    <property type="entry name" value="CcO_II_C"/>
</dbReference>
<dbReference type="InterPro" id="IPR001505">
    <property type="entry name" value="Copper_CuA"/>
</dbReference>
<dbReference type="InterPro" id="IPR008972">
    <property type="entry name" value="Cupredoxin"/>
</dbReference>
<dbReference type="InterPro" id="IPR014222">
    <property type="entry name" value="Cyt_c_oxidase_su2"/>
</dbReference>
<dbReference type="InterPro" id="IPR011759">
    <property type="entry name" value="Cyt_c_oxidase_su2_TM_dom"/>
</dbReference>
<dbReference type="InterPro" id="IPR036257">
    <property type="entry name" value="Cyt_c_oxidase_su2_TM_sf"/>
</dbReference>
<dbReference type="NCBIfam" id="TIGR02866">
    <property type="entry name" value="CoxB"/>
    <property type="match status" value="1"/>
</dbReference>
<dbReference type="PANTHER" id="PTHR22888:SF9">
    <property type="entry name" value="CYTOCHROME C OXIDASE SUBUNIT 2"/>
    <property type="match status" value="1"/>
</dbReference>
<dbReference type="PANTHER" id="PTHR22888">
    <property type="entry name" value="CYTOCHROME C OXIDASE, SUBUNIT II"/>
    <property type="match status" value="1"/>
</dbReference>
<dbReference type="Pfam" id="PF00116">
    <property type="entry name" value="COX2"/>
    <property type="match status" value="1"/>
</dbReference>
<dbReference type="Pfam" id="PF02790">
    <property type="entry name" value="COX2_TM"/>
    <property type="match status" value="1"/>
</dbReference>
<dbReference type="PRINTS" id="PR01166">
    <property type="entry name" value="CYCOXIDASEII"/>
</dbReference>
<dbReference type="SUPFAM" id="SSF49503">
    <property type="entry name" value="Cupredoxins"/>
    <property type="match status" value="1"/>
</dbReference>
<dbReference type="SUPFAM" id="SSF81464">
    <property type="entry name" value="Cytochrome c oxidase subunit II-like, transmembrane region"/>
    <property type="match status" value="1"/>
</dbReference>
<dbReference type="PROSITE" id="PS00078">
    <property type="entry name" value="COX2"/>
    <property type="match status" value="1"/>
</dbReference>
<dbReference type="PROSITE" id="PS50857">
    <property type="entry name" value="COX2_CUA"/>
    <property type="match status" value="1"/>
</dbReference>
<dbReference type="PROSITE" id="PS50999">
    <property type="entry name" value="COX2_TM"/>
    <property type="match status" value="1"/>
</dbReference>
<geneLocation type="mitochondrion"/>
<accession>Q38RU4</accession>
<sequence>MAYPFQLGLQDATSPIMEELTNFHDHTLMIVFLISSLVLYIISLMLTTKLTHTSTMDAQEVETIWTILPAAILVLIALPSLRILYMMDEINNPVLTVKTMGHQWYWSYEYTDYEDLCFDSYMIPTNELKPGDLRLLEVDNRVVLPMELPIRMLISSEDVLHSWAVPSLGLKTDAIPGRLNQATVTSNRPGLFYGQCSEICGANHSFMPIVLEMVPLKHFENWSASMV</sequence>
<feature type="chain" id="PRO_0000257862" description="Cytochrome c oxidase subunit 2">
    <location>
        <begin position="1"/>
        <end position="227"/>
    </location>
</feature>
<feature type="topological domain" description="Mitochondrial intermembrane" evidence="3">
    <location>
        <begin position="1"/>
        <end position="14"/>
    </location>
</feature>
<feature type="transmembrane region" description="Helical; Name=I" evidence="3">
    <location>
        <begin position="15"/>
        <end position="45"/>
    </location>
</feature>
<feature type="topological domain" description="Mitochondrial matrix" evidence="3">
    <location>
        <begin position="46"/>
        <end position="59"/>
    </location>
</feature>
<feature type="transmembrane region" description="Helical; Name=II" evidence="3">
    <location>
        <begin position="60"/>
        <end position="87"/>
    </location>
</feature>
<feature type="topological domain" description="Mitochondrial intermembrane" evidence="3">
    <location>
        <begin position="88"/>
        <end position="227"/>
    </location>
</feature>
<feature type="binding site" evidence="3">
    <location>
        <position position="161"/>
    </location>
    <ligand>
        <name>Cu cation</name>
        <dbReference type="ChEBI" id="CHEBI:23378"/>
        <label>A1</label>
    </ligand>
</feature>
<feature type="binding site" evidence="3">
    <location>
        <position position="196"/>
    </location>
    <ligand>
        <name>Cu cation</name>
        <dbReference type="ChEBI" id="CHEBI:23378"/>
        <label>A1</label>
    </ligand>
</feature>
<feature type="binding site" evidence="3">
    <location>
        <position position="196"/>
    </location>
    <ligand>
        <name>Cu cation</name>
        <dbReference type="ChEBI" id="CHEBI:23378"/>
        <label>A2</label>
    </ligand>
</feature>
<feature type="binding site" evidence="3">
    <location>
        <position position="198"/>
    </location>
    <ligand>
        <name>Cu cation</name>
        <dbReference type="ChEBI" id="CHEBI:23378"/>
        <label>A2</label>
    </ligand>
</feature>
<feature type="binding site" evidence="3">
    <location>
        <position position="198"/>
    </location>
    <ligand>
        <name>Mg(2+)</name>
        <dbReference type="ChEBI" id="CHEBI:18420"/>
        <note>ligand shared with MT-CO1</note>
    </ligand>
</feature>
<feature type="binding site" evidence="3">
    <location>
        <position position="200"/>
    </location>
    <ligand>
        <name>Cu cation</name>
        <dbReference type="ChEBI" id="CHEBI:23378"/>
        <label>A1</label>
    </ligand>
</feature>
<feature type="binding site" evidence="3">
    <location>
        <position position="200"/>
    </location>
    <ligand>
        <name>Cu cation</name>
        <dbReference type="ChEBI" id="CHEBI:23378"/>
        <label>A2</label>
    </ligand>
</feature>
<feature type="binding site" evidence="3">
    <location>
        <position position="204"/>
    </location>
    <ligand>
        <name>Cu cation</name>
        <dbReference type="ChEBI" id="CHEBI:23378"/>
        <label>A2</label>
    </ligand>
</feature>
<feature type="binding site" evidence="3">
    <location>
        <position position="207"/>
    </location>
    <ligand>
        <name>Cu cation</name>
        <dbReference type="ChEBI" id="CHEBI:23378"/>
        <label>A1</label>
    </ligand>
</feature>